<gene>
    <name type="ordered locus">NGR_a03690</name>
    <name type="ORF">y4fM</name>
</gene>
<organism>
    <name type="scientific">Sinorhizobium fredii (strain NBRC 101917 / NGR234)</name>
    <dbReference type="NCBI Taxonomy" id="394"/>
    <lineage>
        <taxon>Bacteria</taxon>
        <taxon>Pseudomonadati</taxon>
        <taxon>Pseudomonadota</taxon>
        <taxon>Alphaproteobacteria</taxon>
        <taxon>Hyphomicrobiales</taxon>
        <taxon>Rhizobiaceae</taxon>
        <taxon>Sinorhizobium/Ensifer group</taxon>
        <taxon>Sinorhizobium</taxon>
    </lineage>
</organism>
<reference key="1">
    <citation type="journal article" date="1997" name="Nature">
        <title>Molecular basis of symbiosis between Rhizobium and legumes.</title>
        <authorList>
            <person name="Freiberg C.A."/>
            <person name="Fellay R."/>
            <person name="Bairoch A."/>
            <person name="Broughton W.J."/>
            <person name="Rosenthal A."/>
            <person name="Perret X."/>
        </authorList>
    </citation>
    <scope>NUCLEOTIDE SEQUENCE [LARGE SCALE GENOMIC DNA]</scope>
    <source>
        <strain>NBRC 101917 / NGR234</strain>
    </source>
</reference>
<reference key="2">
    <citation type="journal article" date="2009" name="Appl. Environ. Microbiol.">
        <title>Rhizobium sp. strain NGR234 possesses a remarkable number of secretion systems.</title>
        <authorList>
            <person name="Schmeisser C."/>
            <person name="Liesegang H."/>
            <person name="Krysciak D."/>
            <person name="Bakkou N."/>
            <person name="Le Quere A."/>
            <person name="Wollherr A."/>
            <person name="Heinemeyer I."/>
            <person name="Morgenstern B."/>
            <person name="Pommerening-Roeser A."/>
            <person name="Flores M."/>
            <person name="Palacios R."/>
            <person name="Brenner S."/>
            <person name="Gottschalk G."/>
            <person name="Schmitz R.A."/>
            <person name="Broughton W.J."/>
            <person name="Perret X."/>
            <person name="Strittmatter A.W."/>
            <person name="Streit W.R."/>
        </authorList>
    </citation>
    <scope>NUCLEOTIDE SEQUENCE [LARGE SCALE GENOMIC DNA]</scope>
    <source>
        <strain>NBRC 101917 / NGR234</strain>
    </source>
</reference>
<dbReference type="EMBL" id="U00090">
    <property type="protein sequence ID" value="AAB91669.1"/>
    <property type="molecule type" value="Genomic_DNA"/>
</dbReference>
<dbReference type="RefSeq" id="NP_443857.1">
    <property type="nucleotide sequence ID" value="NC_000914.2"/>
</dbReference>
<dbReference type="SMR" id="P55451"/>
<dbReference type="KEGG" id="rhi:NGR_a03690"/>
<dbReference type="PATRIC" id="fig|394.7.peg.377"/>
<dbReference type="eggNOG" id="COG1082">
    <property type="taxonomic scope" value="Bacteria"/>
</dbReference>
<dbReference type="HOGENOM" id="CLU_081792_0_0_5"/>
<dbReference type="OrthoDB" id="110795at2"/>
<dbReference type="Proteomes" id="UP000001054">
    <property type="component" value="Plasmid pNGR234a"/>
</dbReference>
<dbReference type="Gene3D" id="3.20.20.150">
    <property type="entry name" value="Divalent-metal-dependent TIM barrel enzymes"/>
    <property type="match status" value="1"/>
</dbReference>
<dbReference type="InterPro" id="IPR050312">
    <property type="entry name" value="IolE/XylAMocC-like"/>
</dbReference>
<dbReference type="InterPro" id="IPR036237">
    <property type="entry name" value="Xyl_isomerase-like_sf"/>
</dbReference>
<dbReference type="InterPro" id="IPR013022">
    <property type="entry name" value="Xyl_isomerase-like_TIM-brl"/>
</dbReference>
<dbReference type="PANTHER" id="PTHR12110">
    <property type="entry name" value="HYDROXYPYRUVATE ISOMERASE"/>
    <property type="match status" value="1"/>
</dbReference>
<dbReference type="Pfam" id="PF01261">
    <property type="entry name" value="AP_endonuc_2"/>
    <property type="match status" value="1"/>
</dbReference>
<dbReference type="SUPFAM" id="SSF51658">
    <property type="entry name" value="Xylose isomerase-like"/>
    <property type="match status" value="1"/>
</dbReference>
<sequence length="311" mass="35457">MDTEMDTCITVWHWPTHERWYDEGIRHSLDLIREAGFTHINWNPDSGSSYMLADAEIEFTRRIVAEAGLQTHSVHASNGVNPVSELAHAGPVPFAQETRKNFLSHHDWQRQSGVELLKNRIDLAAALGAPNVVLHVDITDDTFRSVENENLLFEPLFRSFDDVEAHCIERNVQIAVETLVKANAENYLKLYARLFSRYSSDFVGVCYDSGHWELIEPGKLSVLERHGDRLIATHIHDNFGAKDDHLLPFDGRLDWDAITKAIAATNYRTPLNFETPMDRYVLSESSYYQRAHAIALRLEEMVASARDRAAN</sequence>
<name>Y4FM_SINFN</name>
<feature type="chain" id="PRO_0000200840" description="Uncharacterized protein y4fM">
    <location>
        <begin position="1"/>
        <end position="311"/>
    </location>
</feature>
<keyword id="KW-0614">Plasmid</keyword>
<keyword id="KW-1185">Reference proteome</keyword>
<protein>
    <recommendedName>
        <fullName>Uncharacterized protein y4fM</fullName>
    </recommendedName>
</protein>
<proteinExistence type="predicted"/>
<accession>P55451</accession>
<geneLocation type="plasmid">
    <name>sym pNGR234a</name>
</geneLocation>